<protein>
    <recommendedName>
        <fullName evidence="1">Valine--tRNA ligase</fullName>
        <ecNumber evidence="1">6.1.1.9</ecNumber>
    </recommendedName>
    <alternativeName>
        <fullName evidence="1">Valyl-tRNA synthetase</fullName>
        <shortName evidence="1">ValRS</shortName>
    </alternativeName>
</protein>
<reference key="1">
    <citation type="journal article" date="2000" name="Science">
        <title>Complete genome sequence of Neisseria meningitidis serogroup B strain MC58.</title>
        <authorList>
            <person name="Tettelin H."/>
            <person name="Saunders N.J."/>
            <person name="Heidelberg J.F."/>
            <person name="Jeffries A.C."/>
            <person name="Nelson K.E."/>
            <person name="Eisen J.A."/>
            <person name="Ketchum K.A."/>
            <person name="Hood D.W."/>
            <person name="Peden J.F."/>
            <person name="Dodson R.J."/>
            <person name="Nelson W.C."/>
            <person name="Gwinn M.L."/>
            <person name="DeBoy R.T."/>
            <person name="Peterson J.D."/>
            <person name="Hickey E.K."/>
            <person name="Haft D.H."/>
            <person name="Salzberg S.L."/>
            <person name="White O."/>
            <person name="Fleischmann R.D."/>
            <person name="Dougherty B.A."/>
            <person name="Mason T.M."/>
            <person name="Ciecko A."/>
            <person name="Parksey D.S."/>
            <person name="Blair E."/>
            <person name="Cittone H."/>
            <person name="Clark E.B."/>
            <person name="Cotton M.D."/>
            <person name="Utterback T.R."/>
            <person name="Khouri H.M."/>
            <person name="Qin H."/>
            <person name="Vamathevan J.J."/>
            <person name="Gill J."/>
            <person name="Scarlato V."/>
            <person name="Masignani V."/>
            <person name="Pizza M."/>
            <person name="Grandi G."/>
            <person name="Sun L."/>
            <person name="Smith H.O."/>
            <person name="Fraser C.M."/>
            <person name="Moxon E.R."/>
            <person name="Rappuoli R."/>
            <person name="Venter J.C."/>
        </authorList>
    </citation>
    <scope>NUCLEOTIDE SEQUENCE [LARGE SCALE GENOMIC DNA]</scope>
    <source>
        <strain>ATCC BAA-335 / MC58</strain>
    </source>
</reference>
<keyword id="KW-0030">Aminoacyl-tRNA synthetase</keyword>
<keyword id="KW-0067">ATP-binding</keyword>
<keyword id="KW-0175">Coiled coil</keyword>
<keyword id="KW-0963">Cytoplasm</keyword>
<keyword id="KW-0436">Ligase</keyword>
<keyword id="KW-0547">Nucleotide-binding</keyword>
<keyword id="KW-0648">Protein biosynthesis</keyword>
<keyword id="KW-1185">Reference proteome</keyword>
<organism>
    <name type="scientific">Neisseria meningitidis serogroup B (strain ATCC BAA-335 / MC58)</name>
    <dbReference type="NCBI Taxonomy" id="122586"/>
    <lineage>
        <taxon>Bacteria</taxon>
        <taxon>Pseudomonadati</taxon>
        <taxon>Pseudomonadota</taxon>
        <taxon>Betaproteobacteria</taxon>
        <taxon>Neisseriales</taxon>
        <taxon>Neisseriaceae</taxon>
        <taxon>Neisseria</taxon>
    </lineage>
</organism>
<sequence>MLDKYNPAEIESKHYQNWEEQGYFQPDMDLTKPSFSIQLPPPNVTGTLHMGHAFNQTIMDGLTRYYRMKGCNTAWIPGTDHAGIATQIVVERQLAAQNVSRHDLGREKFLEKVWEWKEVSGGTITQQMRRVGCSADWTREYFTMDDVRAETVTEVFVRLYEQGLIYRGKRLVNWDPVLGTAVSDLEVESVEEQGSMWHIRYPLADNPAEAVIVATTRPETLLGDVAVAVNPEDERYTHLIGKELILPLTGRTIPVIADEYVEKDFGTGCVKITPAHDFNDYEVGKRHDTRLINVFNLEAKVLANAEVFNFKGEAQLGFALPEKYAGLDRFAARKQMVADLQEQGFLVEIKPHTLMTPKGDRTGSVIEPMLTSQWFVAMSATPNGGEPDSEFKGLSLADKAKKAVDSGAVRFIPENWVNTYNQWMNNIQDWCISRQLWWGHQIPAWYDNEGNVYVARNQEEAEKQAGKTGLTREEDVLDTWFSSALVPFSTLGWPSETDELKAFLPSNVLVTGYEIIFFWVARMIMMTTHFTGKVPFKDVYIHGIVRDHEGKKMSKSEGNVIDPVDLIDGIGLEKLLVKRTTGLRKPETAPKVEEATKKLFPEGIPSMGADALRFTMASYASLGRSVNFDFKRAEGYRNFCNKIWNATNFVLMNTENQDCGYGATAAEPRGYSFPDMWIVGRLNQTIEQVTQAYETYRFDLAAETLYSFVWNDYCDWYLELAKVQLQTGCASRQRATRHTLLRVLEAALRLLHPIIPFITEELWQTVAPMCDAKTADSIMLARFPEADSGEIVQTAFEQMTVLQDLIGAVRNLRGEMGIQPNVKAPLFVESTDDLADYLKYLPMMTRLTEAQQVAALPESEDAPVAVCNGARLMLKVEIDKAAETARLSKEAEKLQKALDKLNAKLSKPGYTEKAPAHLVEKDKADLAELEDKMAKVQNQLAKLKD</sequence>
<gene>
    <name evidence="1" type="primary">valS</name>
    <name type="ordered locus">NMB0174</name>
</gene>
<proteinExistence type="inferred from homology"/>
<accession>Q9K1H7</accession>
<evidence type="ECO:0000255" key="1">
    <source>
        <dbReference type="HAMAP-Rule" id="MF_02004"/>
    </source>
</evidence>
<comment type="function">
    <text evidence="1">Catalyzes the attachment of valine to tRNA(Val). As ValRS can inadvertently accommodate and process structurally similar amino acids such as threonine, to avoid such errors, it has a 'posttransfer' editing activity that hydrolyzes mischarged Thr-tRNA(Val) in a tRNA-dependent manner.</text>
</comment>
<comment type="catalytic activity">
    <reaction evidence="1">
        <text>tRNA(Val) + L-valine + ATP = L-valyl-tRNA(Val) + AMP + diphosphate</text>
        <dbReference type="Rhea" id="RHEA:10704"/>
        <dbReference type="Rhea" id="RHEA-COMP:9672"/>
        <dbReference type="Rhea" id="RHEA-COMP:9708"/>
        <dbReference type="ChEBI" id="CHEBI:30616"/>
        <dbReference type="ChEBI" id="CHEBI:33019"/>
        <dbReference type="ChEBI" id="CHEBI:57762"/>
        <dbReference type="ChEBI" id="CHEBI:78442"/>
        <dbReference type="ChEBI" id="CHEBI:78537"/>
        <dbReference type="ChEBI" id="CHEBI:456215"/>
        <dbReference type="EC" id="6.1.1.9"/>
    </reaction>
</comment>
<comment type="subunit">
    <text evidence="1">Monomer.</text>
</comment>
<comment type="subcellular location">
    <subcellularLocation>
        <location evidence="1">Cytoplasm</location>
    </subcellularLocation>
</comment>
<comment type="domain">
    <text evidence="1">ValRS has two distinct active sites: one for aminoacylation and one for editing. The misactivated threonine is translocated from the active site to the editing site.</text>
</comment>
<comment type="domain">
    <text evidence="1">The C-terminal coiled-coil domain is crucial for aminoacylation activity.</text>
</comment>
<comment type="similarity">
    <text evidence="1">Belongs to the class-I aminoacyl-tRNA synthetase family. ValS type 1 subfamily.</text>
</comment>
<name>SYV_NEIMB</name>
<dbReference type="EC" id="6.1.1.9" evidence="1"/>
<dbReference type="EMBL" id="AE002098">
    <property type="protein sequence ID" value="AAF40631.1"/>
    <property type="molecule type" value="Genomic_DNA"/>
</dbReference>
<dbReference type="PIR" id="F81230">
    <property type="entry name" value="F81230"/>
</dbReference>
<dbReference type="RefSeq" id="NP_273232.1">
    <property type="nucleotide sequence ID" value="NC_003112.2"/>
</dbReference>
<dbReference type="RefSeq" id="WP_002224777.1">
    <property type="nucleotide sequence ID" value="NC_003112.2"/>
</dbReference>
<dbReference type="SMR" id="Q9K1H7"/>
<dbReference type="FunCoup" id="Q9K1H7">
    <property type="interactions" value="493"/>
</dbReference>
<dbReference type="STRING" id="122586.NMB0174"/>
<dbReference type="PaxDb" id="122586-NMB0174"/>
<dbReference type="KEGG" id="nme:NMB0174"/>
<dbReference type="PATRIC" id="fig|122586.8.peg.216"/>
<dbReference type="HOGENOM" id="CLU_001493_0_2_4"/>
<dbReference type="InParanoid" id="Q9K1H7"/>
<dbReference type="OrthoDB" id="9810365at2"/>
<dbReference type="Proteomes" id="UP000000425">
    <property type="component" value="Chromosome"/>
</dbReference>
<dbReference type="GO" id="GO:0005829">
    <property type="term" value="C:cytosol"/>
    <property type="evidence" value="ECO:0000318"/>
    <property type="project" value="GO_Central"/>
</dbReference>
<dbReference type="GO" id="GO:0002161">
    <property type="term" value="F:aminoacyl-tRNA deacylase activity"/>
    <property type="evidence" value="ECO:0007669"/>
    <property type="project" value="InterPro"/>
</dbReference>
<dbReference type="GO" id="GO:0005524">
    <property type="term" value="F:ATP binding"/>
    <property type="evidence" value="ECO:0007669"/>
    <property type="project" value="UniProtKB-UniRule"/>
</dbReference>
<dbReference type="GO" id="GO:0004832">
    <property type="term" value="F:valine-tRNA ligase activity"/>
    <property type="evidence" value="ECO:0000318"/>
    <property type="project" value="GO_Central"/>
</dbReference>
<dbReference type="GO" id="GO:0006438">
    <property type="term" value="P:valyl-tRNA aminoacylation"/>
    <property type="evidence" value="ECO:0000318"/>
    <property type="project" value="GO_Central"/>
</dbReference>
<dbReference type="CDD" id="cd07962">
    <property type="entry name" value="Anticodon_Ia_Val"/>
    <property type="match status" value="1"/>
</dbReference>
<dbReference type="CDD" id="cd00817">
    <property type="entry name" value="ValRS_core"/>
    <property type="match status" value="1"/>
</dbReference>
<dbReference type="FunFam" id="1.10.287.380:FF:000001">
    <property type="entry name" value="Valine--tRNA ligase"/>
    <property type="match status" value="1"/>
</dbReference>
<dbReference type="FunFam" id="1.10.730.10:FF:000009">
    <property type="entry name" value="Valine--tRNA ligase, mitochondrial"/>
    <property type="match status" value="1"/>
</dbReference>
<dbReference type="FunFam" id="3.40.50.620:FF:000020">
    <property type="entry name" value="Valine--tRNA ligase, mitochondrial"/>
    <property type="match status" value="1"/>
</dbReference>
<dbReference type="FunFam" id="3.40.50.620:FF:000078">
    <property type="entry name" value="Valine--tRNA ligase, mitochondrial"/>
    <property type="match status" value="1"/>
</dbReference>
<dbReference type="Gene3D" id="3.40.50.620">
    <property type="entry name" value="HUPs"/>
    <property type="match status" value="2"/>
</dbReference>
<dbReference type="Gene3D" id="1.10.730.10">
    <property type="entry name" value="Isoleucyl-tRNA Synthetase, Domain 1"/>
    <property type="match status" value="1"/>
</dbReference>
<dbReference type="Gene3D" id="1.10.287.380">
    <property type="entry name" value="Valyl-tRNA synthetase, C-terminal domain"/>
    <property type="match status" value="1"/>
</dbReference>
<dbReference type="HAMAP" id="MF_02004">
    <property type="entry name" value="Val_tRNA_synth_type1"/>
    <property type="match status" value="1"/>
</dbReference>
<dbReference type="InterPro" id="IPR001412">
    <property type="entry name" value="aa-tRNA-synth_I_CS"/>
</dbReference>
<dbReference type="InterPro" id="IPR002300">
    <property type="entry name" value="aa-tRNA-synth_Ia"/>
</dbReference>
<dbReference type="InterPro" id="IPR033705">
    <property type="entry name" value="Anticodon_Ia_Val"/>
</dbReference>
<dbReference type="InterPro" id="IPR013155">
    <property type="entry name" value="M/V/L/I-tRNA-synth_anticd-bd"/>
</dbReference>
<dbReference type="InterPro" id="IPR014729">
    <property type="entry name" value="Rossmann-like_a/b/a_fold"/>
</dbReference>
<dbReference type="InterPro" id="IPR010978">
    <property type="entry name" value="tRNA-bd_arm"/>
</dbReference>
<dbReference type="InterPro" id="IPR009080">
    <property type="entry name" value="tRNAsynth_Ia_anticodon-bd"/>
</dbReference>
<dbReference type="InterPro" id="IPR037118">
    <property type="entry name" value="Val-tRNA_synth_C_sf"/>
</dbReference>
<dbReference type="InterPro" id="IPR019499">
    <property type="entry name" value="Val-tRNA_synth_tRNA-bd"/>
</dbReference>
<dbReference type="InterPro" id="IPR009008">
    <property type="entry name" value="Val/Leu/Ile-tRNA-synth_edit"/>
</dbReference>
<dbReference type="InterPro" id="IPR002303">
    <property type="entry name" value="Valyl-tRNA_ligase"/>
</dbReference>
<dbReference type="NCBIfam" id="NF004349">
    <property type="entry name" value="PRK05729.1"/>
    <property type="match status" value="1"/>
</dbReference>
<dbReference type="NCBIfam" id="TIGR00422">
    <property type="entry name" value="valS"/>
    <property type="match status" value="1"/>
</dbReference>
<dbReference type="PANTHER" id="PTHR11946:SF93">
    <property type="entry name" value="VALINE--TRNA LIGASE, CHLOROPLASTIC_MITOCHONDRIAL 2"/>
    <property type="match status" value="1"/>
</dbReference>
<dbReference type="PANTHER" id="PTHR11946">
    <property type="entry name" value="VALYL-TRNA SYNTHETASES"/>
    <property type="match status" value="1"/>
</dbReference>
<dbReference type="Pfam" id="PF08264">
    <property type="entry name" value="Anticodon_1"/>
    <property type="match status" value="1"/>
</dbReference>
<dbReference type="Pfam" id="PF00133">
    <property type="entry name" value="tRNA-synt_1"/>
    <property type="match status" value="1"/>
</dbReference>
<dbReference type="Pfam" id="PF10458">
    <property type="entry name" value="Val_tRNA-synt_C"/>
    <property type="match status" value="1"/>
</dbReference>
<dbReference type="PRINTS" id="PR00986">
    <property type="entry name" value="TRNASYNTHVAL"/>
</dbReference>
<dbReference type="SUPFAM" id="SSF47323">
    <property type="entry name" value="Anticodon-binding domain of a subclass of class I aminoacyl-tRNA synthetases"/>
    <property type="match status" value="1"/>
</dbReference>
<dbReference type="SUPFAM" id="SSF52374">
    <property type="entry name" value="Nucleotidylyl transferase"/>
    <property type="match status" value="1"/>
</dbReference>
<dbReference type="SUPFAM" id="SSF46589">
    <property type="entry name" value="tRNA-binding arm"/>
    <property type="match status" value="1"/>
</dbReference>
<dbReference type="SUPFAM" id="SSF50677">
    <property type="entry name" value="ValRS/IleRS/LeuRS editing domain"/>
    <property type="match status" value="1"/>
</dbReference>
<dbReference type="PROSITE" id="PS00178">
    <property type="entry name" value="AA_TRNA_LIGASE_I"/>
    <property type="match status" value="1"/>
</dbReference>
<feature type="chain" id="PRO_0000106235" description="Valine--tRNA ligase">
    <location>
        <begin position="1"/>
        <end position="945"/>
    </location>
</feature>
<feature type="coiled-coil region" evidence="1">
    <location>
        <begin position="879"/>
        <end position="945"/>
    </location>
</feature>
<feature type="short sequence motif" description="'HIGH' region">
    <location>
        <begin position="42"/>
        <end position="52"/>
    </location>
</feature>
<feature type="short sequence motif" description="'KMSKS' region">
    <location>
        <begin position="552"/>
        <end position="556"/>
    </location>
</feature>
<feature type="binding site" evidence="1">
    <location>
        <position position="555"/>
    </location>
    <ligand>
        <name>ATP</name>
        <dbReference type="ChEBI" id="CHEBI:30616"/>
    </ligand>
</feature>